<reference key="1">
    <citation type="journal article" date="2006" name="PLoS Genet.">
        <title>Secrets of soil survival revealed by the genome sequence of Arthrobacter aurescens TC1.</title>
        <authorList>
            <person name="Mongodin E.F."/>
            <person name="Shapir N."/>
            <person name="Daugherty S.C."/>
            <person name="DeBoy R.T."/>
            <person name="Emerson J.B."/>
            <person name="Shvartzbeyn A."/>
            <person name="Radune D."/>
            <person name="Vamathevan J."/>
            <person name="Riggs F."/>
            <person name="Grinberg V."/>
            <person name="Khouri H.M."/>
            <person name="Wackett L.P."/>
            <person name="Nelson K.E."/>
            <person name="Sadowsky M.J."/>
        </authorList>
    </citation>
    <scope>NUCLEOTIDE SEQUENCE [LARGE SCALE GENOMIC DNA]</scope>
    <source>
        <strain>TC1</strain>
    </source>
</reference>
<protein>
    <recommendedName>
        <fullName evidence="1">Putative glutamate--cysteine ligase 2-2</fullName>
        <ecNumber evidence="1">6.3.2.2</ecNumber>
    </recommendedName>
    <alternativeName>
        <fullName evidence="1">Gamma-glutamylcysteine synthetase 2-2</fullName>
        <shortName evidence="1">GCS 2-2</shortName>
        <shortName evidence="1">Gamma-GCS 2-2</shortName>
    </alternativeName>
</protein>
<name>GCS22_PAEAT</name>
<organism>
    <name type="scientific">Paenarthrobacter aurescens (strain TC1)</name>
    <dbReference type="NCBI Taxonomy" id="290340"/>
    <lineage>
        <taxon>Bacteria</taxon>
        <taxon>Bacillati</taxon>
        <taxon>Actinomycetota</taxon>
        <taxon>Actinomycetes</taxon>
        <taxon>Micrococcales</taxon>
        <taxon>Micrococcaceae</taxon>
        <taxon>Paenarthrobacter</taxon>
    </lineage>
</organism>
<sequence>MQIDFAPSRQSTLGVEWELALVNARTGELVSVANDVLKGVAANHPDLNEDDEHPHIKRELLLNTVELVTGICETVKDAKEDLSRSLAAVREVTDPMGVEVFCAGSHPFSPPLLQPVTDKERYAKLIERTQWWGRQMVIYGVHVHVGIDHRDKVLPILDGLVNYFPHFQALSASSPYWAGEETGYASQRALMFQQLPTAGLPFQFETWEAYESYVQDMFTTGVIDATSEIRWDIRPVANLGTIEMRICDGLATLEEVGAIAALTQCLVDEFSSILDAGGSIPTMPPWHVQENKWRAARYGMEAIIILDAEGNEQLVTEHLAETVSRLEPVAAKLGCSEELADVLKIIQRGASYQRQRRVAAEHNGDLQAVVMDLVQQMRKGPDA</sequence>
<proteinExistence type="inferred from homology"/>
<gene>
    <name type="ordered locus">AAur_2882</name>
</gene>
<keyword id="KW-0067">ATP-binding</keyword>
<keyword id="KW-0436">Ligase</keyword>
<keyword id="KW-0547">Nucleotide-binding</keyword>
<accession>A1R8M8</accession>
<feature type="chain" id="PRO_0000291482" description="Putative glutamate--cysteine ligase 2-2">
    <location>
        <begin position="1"/>
        <end position="383"/>
    </location>
</feature>
<dbReference type="EC" id="6.3.2.2" evidence="1"/>
<dbReference type="EMBL" id="CP000474">
    <property type="protein sequence ID" value="ABM08998.1"/>
    <property type="molecule type" value="Genomic_DNA"/>
</dbReference>
<dbReference type="RefSeq" id="WP_011775530.1">
    <property type="nucleotide sequence ID" value="NC_008711.1"/>
</dbReference>
<dbReference type="SMR" id="A1R8M8"/>
<dbReference type="STRING" id="290340.AAur_2882"/>
<dbReference type="KEGG" id="aau:AAur_2882"/>
<dbReference type="eggNOG" id="COG2170">
    <property type="taxonomic scope" value="Bacteria"/>
</dbReference>
<dbReference type="HOGENOM" id="CLU_044848_1_0_11"/>
<dbReference type="OrthoDB" id="9769628at2"/>
<dbReference type="Proteomes" id="UP000000637">
    <property type="component" value="Chromosome"/>
</dbReference>
<dbReference type="GO" id="GO:0005524">
    <property type="term" value="F:ATP binding"/>
    <property type="evidence" value="ECO:0007669"/>
    <property type="project" value="UniProtKB-KW"/>
</dbReference>
<dbReference type="GO" id="GO:0004357">
    <property type="term" value="F:glutamate-cysteine ligase activity"/>
    <property type="evidence" value="ECO:0007669"/>
    <property type="project" value="UniProtKB-EC"/>
</dbReference>
<dbReference type="GO" id="GO:0042398">
    <property type="term" value="P:modified amino acid biosynthetic process"/>
    <property type="evidence" value="ECO:0007669"/>
    <property type="project" value="InterPro"/>
</dbReference>
<dbReference type="Gene3D" id="3.30.590.20">
    <property type="match status" value="1"/>
</dbReference>
<dbReference type="HAMAP" id="MF_01609">
    <property type="entry name" value="Glu_cys_ligase_2"/>
    <property type="match status" value="1"/>
</dbReference>
<dbReference type="InterPro" id="IPR050141">
    <property type="entry name" value="GCL_type2/YbdK_subfam"/>
</dbReference>
<dbReference type="InterPro" id="IPR006336">
    <property type="entry name" value="GCS2"/>
</dbReference>
<dbReference type="InterPro" id="IPR014746">
    <property type="entry name" value="Gln_synth/guanido_kin_cat_dom"/>
</dbReference>
<dbReference type="InterPro" id="IPR011793">
    <property type="entry name" value="YbdK"/>
</dbReference>
<dbReference type="NCBIfam" id="TIGR02050">
    <property type="entry name" value="gshA_cyan_rel"/>
    <property type="match status" value="1"/>
</dbReference>
<dbReference type="NCBIfam" id="NF010042">
    <property type="entry name" value="PRK13517.1-2"/>
    <property type="match status" value="1"/>
</dbReference>
<dbReference type="NCBIfam" id="NF010043">
    <property type="entry name" value="PRK13517.1-3"/>
    <property type="match status" value="1"/>
</dbReference>
<dbReference type="NCBIfam" id="NF010044">
    <property type="entry name" value="PRK13517.1-4"/>
    <property type="match status" value="1"/>
</dbReference>
<dbReference type="PANTHER" id="PTHR36510">
    <property type="entry name" value="GLUTAMATE--CYSTEINE LIGASE 2-RELATED"/>
    <property type="match status" value="1"/>
</dbReference>
<dbReference type="PANTHER" id="PTHR36510:SF1">
    <property type="entry name" value="GLUTAMATE--CYSTEINE LIGASE 2-RELATED"/>
    <property type="match status" value="1"/>
</dbReference>
<dbReference type="Pfam" id="PF04107">
    <property type="entry name" value="GCS2"/>
    <property type="match status" value="1"/>
</dbReference>
<dbReference type="SUPFAM" id="SSF55931">
    <property type="entry name" value="Glutamine synthetase/guanido kinase"/>
    <property type="match status" value="1"/>
</dbReference>
<comment type="function">
    <text evidence="1">ATP-dependent carboxylate-amine ligase which exhibits weak glutamate--cysteine ligase activity.</text>
</comment>
<comment type="catalytic activity">
    <reaction evidence="1">
        <text>L-cysteine + L-glutamate + ATP = gamma-L-glutamyl-L-cysteine + ADP + phosphate + H(+)</text>
        <dbReference type="Rhea" id="RHEA:13285"/>
        <dbReference type="ChEBI" id="CHEBI:15378"/>
        <dbReference type="ChEBI" id="CHEBI:29985"/>
        <dbReference type="ChEBI" id="CHEBI:30616"/>
        <dbReference type="ChEBI" id="CHEBI:35235"/>
        <dbReference type="ChEBI" id="CHEBI:43474"/>
        <dbReference type="ChEBI" id="CHEBI:58173"/>
        <dbReference type="ChEBI" id="CHEBI:456216"/>
        <dbReference type="EC" id="6.3.2.2"/>
    </reaction>
</comment>
<comment type="similarity">
    <text evidence="1">Belongs to the glutamate--cysteine ligase type 2 family. YbdK subfamily.</text>
</comment>
<evidence type="ECO:0000255" key="1">
    <source>
        <dbReference type="HAMAP-Rule" id="MF_01609"/>
    </source>
</evidence>